<organism>
    <name type="scientific">Homo sapiens</name>
    <name type="common">Human</name>
    <dbReference type="NCBI Taxonomy" id="9606"/>
    <lineage>
        <taxon>Eukaryota</taxon>
        <taxon>Metazoa</taxon>
        <taxon>Chordata</taxon>
        <taxon>Craniata</taxon>
        <taxon>Vertebrata</taxon>
        <taxon>Euteleostomi</taxon>
        <taxon>Mammalia</taxon>
        <taxon>Eutheria</taxon>
        <taxon>Euarchontoglires</taxon>
        <taxon>Primates</taxon>
        <taxon>Haplorrhini</taxon>
        <taxon>Catarrhini</taxon>
        <taxon>Hominidae</taxon>
        <taxon>Homo</taxon>
    </lineage>
</organism>
<protein>
    <recommendedName>
        <fullName>E3 ubiquitin-protein ligase NRDP1</fullName>
        <ecNumber>2.3.2.27</ecNumber>
    </recommendedName>
    <alternativeName>
        <fullName>RING finger protein 41</fullName>
    </alternativeName>
    <alternativeName>
        <fullName evidence="14">RING-type E3 ubiquitin transferase NRDP1</fullName>
    </alternativeName>
</protein>
<proteinExistence type="evidence at protein level"/>
<keyword id="KW-0002">3D-structure</keyword>
<keyword id="KW-0025">Alternative splicing</keyword>
<keyword id="KW-0053">Apoptosis</keyword>
<keyword id="KW-0072">Autophagy</keyword>
<keyword id="KW-0479">Metal-binding</keyword>
<keyword id="KW-1267">Proteomics identification</keyword>
<keyword id="KW-1185">Reference proteome</keyword>
<keyword id="KW-0808">Transferase</keyword>
<keyword id="KW-0832">Ubl conjugation</keyword>
<keyword id="KW-0833">Ubl conjugation pathway</keyword>
<keyword id="KW-0862">Zinc</keyword>
<keyword id="KW-0863">Zinc-finger</keyword>
<comment type="function">
    <text evidence="1 2 5 6 8 9 10 11 12">Acts as E3 ubiquitin-protein ligase and regulates the degradation of target proteins. Polyubiquitinates MYD88. Negatively regulates MYD88-dependent production of pro-inflammatory cytokines. Can promote TRIF-dependent production of type I interferon and inhibits infection with vesicular stomatitis virus (By similarity). Promotes also activation of TBK1 and IRF3. Involved in the ubiquitination of erythropoietin (EPO) and interleukin-3 (IL-3) receptors. Thus, through maintaining basal levels of cytokine receptors, RNF41 is involved in the control of hematopoietic progenitor cell differentiation into myeloerythroid lineages (By similarity). Contributes to the maintenance of steady-state ERBB3 levels by mediating its growth factor-independent degradation. Involved in the degradation of the inhibitor of apoptosis BIRC6 and thus is an important regulator of cell death by promoting apoptosis. Also acts as a PRKN modifier that accelerates its degradation, resulting in a reduction of PRKN activity, influencing the balance of intracellular redox state. The RNF41-PRKN pathway regulates autophagosome-lysosome fusion during late mitophagy. Mitophagy is a selective form of autophagy necessary for mitochondrial quality control (PubMed:24949970).</text>
</comment>
<comment type="catalytic activity">
    <reaction>
        <text>S-ubiquitinyl-[E2 ubiquitin-conjugating enzyme]-L-cysteine + [acceptor protein]-L-lysine = [E2 ubiquitin-conjugating enzyme]-L-cysteine + N(6)-ubiquitinyl-[acceptor protein]-L-lysine.</text>
        <dbReference type="EC" id="2.3.2.27"/>
    </reaction>
</comment>
<comment type="pathway">
    <text>Protein modification; protein ubiquitination.</text>
</comment>
<comment type="subunit">
    <text evidence="1">Interacts with USP8, ERBB3, PRKN and BIRC6. Interacts with CSF2RB, EPOR, IL3RA, MYD88 and TBK1. Interacts with CLEC16A (By similarity).</text>
</comment>
<comment type="interaction">
    <interactant intactId="EBI-2130266">
        <id>Q9H4P4</id>
    </interactant>
    <interactant intactId="EBI-8643161">
        <id>Q9NX04</id>
        <label>AIRIM</label>
    </interactant>
    <organismsDiffer>false</organismsDiffer>
    <experiments>6</experiments>
</comment>
<comment type="interaction">
    <interactant intactId="EBI-2130266">
        <id>Q9H4P4</id>
    </interactant>
    <interactant intactId="EBI-12248874">
        <id>A0A0C4DG62</id>
        <label>ARL6IP4</label>
    </interactant>
    <organismsDiffer>false</organismsDiffer>
    <experiments>3</experiments>
</comment>
<comment type="interaction">
    <interactant intactId="EBI-2130266">
        <id>Q9H4P4</id>
    </interactant>
    <interactant intactId="EBI-10248982">
        <id>Q66PJ3-3</id>
        <label>ARL6IP4</label>
    </interactant>
    <organismsDiffer>false</organismsDiffer>
    <experiments>3</experiments>
</comment>
<comment type="interaction">
    <interactant intactId="EBI-2130266">
        <id>Q9H4P4</id>
    </interactant>
    <interactant intactId="EBI-6425205">
        <id>Q9NWX5</id>
        <label>ASB6</label>
    </interactant>
    <organismsDiffer>false</organismsDiffer>
    <experiments>9</experiments>
</comment>
<comment type="interaction">
    <interactant intactId="EBI-2130266">
        <id>Q9H4P4</id>
    </interactant>
    <interactant intactId="EBI-726969">
        <id>Q9UHY7</id>
        <label>ENOPH1</label>
    </interactant>
    <organismsDiffer>false</organismsDiffer>
    <experiments>10</experiments>
</comment>
<comment type="interaction">
    <interactant intactId="EBI-2130266">
        <id>Q9H4P4</id>
    </interactant>
    <interactant intactId="EBI-2126733">
        <id>Q9NSB8</id>
        <label>HOMER2</label>
    </interactant>
    <organismsDiffer>false</organismsDiffer>
    <experiments>3</experiments>
</comment>
<comment type="interaction">
    <interactant intactId="EBI-2130266">
        <id>Q9H4P4</id>
    </interactant>
    <interactant intactId="EBI-10258659">
        <id>Q86U28</id>
        <label>ISCA2</label>
    </interactant>
    <organismsDiffer>false</organismsDiffer>
    <experiments>7</experiments>
</comment>
<comment type="interaction">
    <interactant intactId="EBI-2130266">
        <id>Q9H4P4</id>
    </interactant>
    <interactant intactId="EBI-741037">
        <id>Q9BRK4</id>
        <label>LZTS2</label>
    </interactant>
    <organismsDiffer>false</organismsDiffer>
    <experiments>3</experiments>
</comment>
<comment type="interaction">
    <interactant intactId="EBI-2130266">
        <id>Q9H4P4</id>
    </interactant>
    <interactant intactId="EBI-16439278">
        <id>Q6FHY5</id>
        <label>MEOX2</label>
    </interactant>
    <organismsDiffer>false</organismsDiffer>
    <experiments>3</experiments>
</comment>
<comment type="interaction">
    <interactant intactId="EBI-2130266">
        <id>Q9H4P4</id>
    </interactant>
    <interactant intactId="EBI-11980301">
        <id>Q8N3F0</id>
        <label>MTURN</label>
    </interactant>
    <organismsDiffer>false</organismsDiffer>
    <experiments>3</experiments>
</comment>
<comment type="interaction">
    <interactant intactId="EBI-2130266">
        <id>Q9H4P4</id>
    </interactant>
    <interactant intactId="EBI-2512055">
        <id>O15049</id>
        <label>N4BP3</label>
    </interactant>
    <organismsDiffer>false</organismsDiffer>
    <experiments>6</experiments>
</comment>
<comment type="interaction">
    <interactant intactId="EBI-2130266">
        <id>Q9H4P4</id>
    </interactant>
    <interactant intactId="EBI-746453">
        <id>P54725</id>
        <label>RAD23A</label>
    </interactant>
    <organismsDiffer>false</organismsDiffer>
    <experiments>3</experiments>
</comment>
<comment type="interaction">
    <interactant intactId="EBI-2130266">
        <id>Q9H4P4</id>
    </interactant>
    <interactant intactId="EBI-476655">
        <id>P35249</id>
        <label>RFC4</label>
    </interactant>
    <organismsDiffer>false</organismsDiffer>
    <experiments>7</experiments>
</comment>
<comment type="interaction">
    <interactant intactId="EBI-2130266">
        <id>Q9H4P4</id>
    </interactant>
    <interactant intactId="EBI-2130266">
        <id>Q9H4P4</id>
        <label>RNF41</label>
    </interactant>
    <organismsDiffer>false</organismsDiffer>
    <experiments>3</experiments>
</comment>
<comment type="interaction">
    <interactant intactId="EBI-2130266">
        <id>Q9H4P4</id>
    </interactant>
    <interactant intactId="EBI-9009083">
        <id>Q7LG56</id>
        <label>RRM2B</label>
    </interactant>
    <organismsDiffer>false</organismsDiffer>
    <experiments>3</experiments>
</comment>
<comment type="interaction">
    <interactant intactId="EBI-2130266">
        <id>Q9H4P4</id>
    </interactant>
    <interactant intactId="EBI-9055653">
        <id>Q9GZT4</id>
        <label>SRR</label>
    </interactant>
    <organismsDiffer>false</organismsDiffer>
    <experiments>7</experiments>
</comment>
<comment type="interaction">
    <interactant intactId="EBI-2130266">
        <id>Q9H4P4</id>
    </interactant>
    <interactant intactId="EBI-11955057">
        <id>Q8N8B7-2</id>
        <label>TCEANC</label>
    </interactant>
    <organismsDiffer>false</organismsDiffer>
    <experiments>3</experiments>
</comment>
<comment type="interaction">
    <interactant intactId="EBI-2130266">
        <id>Q9H4P4</id>
    </interactant>
    <interactant intactId="EBI-742074">
        <id>Q99614</id>
        <label>TTC1</label>
    </interactant>
    <organismsDiffer>false</organismsDiffer>
    <experiments>12</experiments>
</comment>
<comment type="interaction">
    <interactant intactId="EBI-2130266">
        <id>Q9H4P4</id>
    </interactant>
    <interactant intactId="EBI-473850">
        <id>P61086</id>
        <label>UBE2K</label>
    </interactant>
    <organismsDiffer>false</organismsDiffer>
    <experiments>3</experiments>
</comment>
<comment type="interaction">
    <interactant intactId="EBI-2130266">
        <id>Q9H4P4</id>
    </interactant>
    <interactant intactId="EBI-2799833">
        <id>Q8N1B4</id>
        <label>VPS52</label>
    </interactant>
    <organismsDiffer>false</organismsDiffer>
    <experiments>7</experiments>
</comment>
<comment type="alternative products">
    <event type="alternative splicing"/>
    <isoform>
        <id>Q9H4P4-1</id>
        <name>1</name>
        <sequence type="displayed"/>
    </isoform>
    <isoform>
        <id>Q9H4P4-2</id>
        <name>2</name>
        <sequence type="described" ref="VSP_044670"/>
    </isoform>
</comment>
<comment type="tissue specificity">
    <text evidence="5">Detected in ovary, testis and prostate.</text>
</comment>
<comment type="PTM">
    <text evidence="7 9 11">Autoubiquitinated. Autoubiquitination leads to proteasomal degradation. Deubiquitinated by USP8 to get stabilized which induces apoptosis.</text>
</comment>
<comment type="sequence caution" evidence="14">
    <conflict type="erroneous initiation">
        <sequence resource="EMBL-CDS" id="AAG01988"/>
    </conflict>
    <text>Truncated N-terminus.</text>
</comment>
<gene>
    <name type="primary">RNF41</name>
    <name type="synonym">FLRF</name>
    <name type="synonym">NRDP1</name>
    <name type="ORF">SBBI03</name>
</gene>
<evidence type="ECO:0000250" key="1"/>
<evidence type="ECO:0000250" key="2">
    <source>
        <dbReference type="UniProtKB" id="Q8BH75"/>
    </source>
</evidence>
<evidence type="ECO:0000255" key="3">
    <source>
        <dbReference type="PROSITE-ProRule" id="PRU00175"/>
    </source>
</evidence>
<evidence type="ECO:0000255" key="4">
    <source>
        <dbReference type="PROSITE-ProRule" id="PRU00455"/>
    </source>
</evidence>
<evidence type="ECO:0000269" key="5">
    <source>
    </source>
</evidence>
<evidence type="ECO:0000269" key="6">
    <source>
    </source>
</evidence>
<evidence type="ECO:0000269" key="7">
    <source>
    </source>
</evidence>
<evidence type="ECO:0000269" key="8">
    <source>
    </source>
</evidence>
<evidence type="ECO:0000269" key="9">
    <source>
    </source>
</evidence>
<evidence type="ECO:0000269" key="10">
    <source>
    </source>
</evidence>
<evidence type="ECO:0000269" key="11">
    <source>
    </source>
</evidence>
<evidence type="ECO:0000269" key="12">
    <source>
    </source>
</evidence>
<evidence type="ECO:0000303" key="13">
    <source>
    </source>
</evidence>
<evidence type="ECO:0000305" key="14"/>
<evidence type="ECO:0007829" key="15">
    <source>
        <dbReference type="PDB" id="2FZP"/>
    </source>
</evidence>
<feature type="chain" id="PRO_0000223954" description="E3 ubiquitin-protein ligase NRDP1">
    <location>
        <begin position="1"/>
        <end position="317"/>
    </location>
</feature>
<feature type="zinc finger region" description="RING-type; degenerate" evidence="3">
    <location>
        <begin position="18"/>
        <end position="57"/>
    </location>
</feature>
<feature type="zinc finger region" description="SIAH-type; degenerate" evidence="4">
    <location>
        <begin position="78"/>
        <end position="138"/>
    </location>
</feature>
<feature type="splice variant" id="VSP_044670" description="In isoform 2." evidence="13">
    <location>
        <begin position="1"/>
        <end position="71"/>
    </location>
</feature>
<feature type="mutagenesis site" description="Loss of activity; when associated with Q-36." evidence="5 7">
    <original>C</original>
    <variation>S</variation>
    <location>
        <position position="34"/>
    </location>
</feature>
<feature type="mutagenesis site" description="Loss of activity; when associated with S-34." evidence="5 7">
    <original>H</original>
    <variation>Q</variation>
    <location>
        <position position="36"/>
    </location>
</feature>
<feature type="mutagenesis site" description="Loss of activity." evidence="5">
    <original>D</original>
    <variation>V</variation>
    <location>
        <position position="56"/>
    </location>
</feature>
<feature type="helix" evidence="15">
    <location>
        <begin position="193"/>
        <end position="205"/>
    </location>
</feature>
<feature type="strand" evidence="15">
    <location>
        <begin position="206"/>
        <end position="211"/>
    </location>
</feature>
<feature type="helix" evidence="15">
    <location>
        <begin position="214"/>
        <end position="216"/>
    </location>
</feature>
<feature type="strand" evidence="15">
    <location>
        <begin position="217"/>
        <end position="220"/>
    </location>
</feature>
<feature type="helix" evidence="15">
    <location>
        <begin position="223"/>
        <end position="235"/>
    </location>
</feature>
<feature type="helix" evidence="15">
    <location>
        <begin position="240"/>
        <end position="248"/>
    </location>
</feature>
<feature type="helix" evidence="15">
    <location>
        <begin position="252"/>
        <end position="254"/>
    </location>
</feature>
<feature type="turn" evidence="15">
    <location>
        <begin position="257"/>
        <end position="259"/>
    </location>
</feature>
<feature type="helix" evidence="15">
    <location>
        <begin position="262"/>
        <end position="267"/>
    </location>
</feature>
<feature type="turn" evidence="15">
    <location>
        <begin position="268"/>
        <end position="270"/>
    </location>
</feature>
<feature type="helix" evidence="15">
    <location>
        <begin position="271"/>
        <end position="274"/>
    </location>
</feature>
<feature type="strand" evidence="15">
    <location>
        <begin position="277"/>
        <end position="279"/>
    </location>
</feature>
<feature type="strand" evidence="15">
    <location>
        <begin position="283"/>
        <end position="289"/>
    </location>
</feature>
<feature type="helix" evidence="15">
    <location>
        <begin position="290"/>
        <end position="292"/>
    </location>
</feature>
<feature type="turn" evidence="15">
    <location>
        <begin position="298"/>
        <end position="300"/>
    </location>
</feature>
<feature type="strand" evidence="15">
    <location>
        <begin position="303"/>
        <end position="312"/>
    </location>
</feature>
<feature type="strand" evidence="15">
    <location>
        <begin position="314"/>
        <end position="316"/>
    </location>
</feature>
<dbReference type="EC" id="2.3.2.27"/>
<dbReference type="EMBL" id="AF077599">
    <property type="protein sequence ID" value="AAC27647.1"/>
    <property type="molecule type" value="mRNA"/>
</dbReference>
<dbReference type="EMBL" id="AK314811">
    <property type="protein sequence ID" value="BAG37335.1"/>
    <property type="molecule type" value="mRNA"/>
</dbReference>
<dbReference type="EMBL" id="AC073896">
    <property type="status" value="NOT_ANNOTATED_CDS"/>
    <property type="molecule type" value="Genomic_DNA"/>
</dbReference>
<dbReference type="EMBL" id="CH471054">
    <property type="protein sequence ID" value="EAW96909.1"/>
    <property type="molecule type" value="Genomic_DNA"/>
</dbReference>
<dbReference type="EMBL" id="CH471054">
    <property type="protein sequence ID" value="EAW96910.1"/>
    <property type="molecule type" value="Genomic_DNA"/>
</dbReference>
<dbReference type="EMBL" id="BC024284">
    <property type="status" value="NOT_ANNOTATED_CDS"/>
    <property type="molecule type" value="mRNA"/>
</dbReference>
<dbReference type="EMBL" id="BC032637">
    <property type="protein sequence ID" value="AAH32637.1"/>
    <property type="molecule type" value="mRNA"/>
</dbReference>
<dbReference type="EMBL" id="AY007109">
    <property type="protein sequence ID" value="AAG01988.1"/>
    <property type="status" value="ALT_INIT"/>
    <property type="molecule type" value="mRNA"/>
</dbReference>
<dbReference type="CCDS" id="CCDS8909.1">
    <molecule id="Q9H4P4-1"/>
</dbReference>
<dbReference type="CCDS" id="CCDS8910.1">
    <molecule id="Q9H4P4-2"/>
</dbReference>
<dbReference type="RefSeq" id="NP_001229755.1">
    <molecule id="Q9H4P4-1"/>
    <property type="nucleotide sequence ID" value="NM_001242826.2"/>
</dbReference>
<dbReference type="RefSeq" id="NP_005776.1">
    <molecule id="Q9H4P4-1"/>
    <property type="nucleotide sequence ID" value="NM_005785.4"/>
</dbReference>
<dbReference type="RefSeq" id="NP_919339.1">
    <molecule id="Q9H4P4-2"/>
    <property type="nucleotide sequence ID" value="NM_194358.3"/>
</dbReference>
<dbReference type="RefSeq" id="NP_919340.1">
    <molecule id="Q9H4P4-1"/>
    <property type="nucleotide sequence ID" value="NM_194359.2"/>
</dbReference>
<dbReference type="RefSeq" id="XP_005268618.1">
    <property type="nucleotide sequence ID" value="XM_005268561.4"/>
</dbReference>
<dbReference type="RefSeq" id="XP_011536036.1">
    <property type="nucleotide sequence ID" value="XM_011537734.2"/>
</dbReference>
<dbReference type="RefSeq" id="XP_011536037.1">
    <property type="nucleotide sequence ID" value="XM_011537735.2"/>
</dbReference>
<dbReference type="PDB" id="2FZP">
    <property type="method" value="X-ray"/>
    <property type="resolution" value="1.87 A"/>
    <property type="chains" value="A=193-317"/>
</dbReference>
<dbReference type="PDB" id="2GWF">
    <property type="method" value="X-ray"/>
    <property type="resolution" value="2.30 A"/>
    <property type="chains" value="B/D/F=193-317"/>
</dbReference>
<dbReference type="PDBsum" id="2FZP"/>
<dbReference type="PDBsum" id="2GWF"/>
<dbReference type="SMR" id="Q9H4P4"/>
<dbReference type="BioGRID" id="115488">
    <property type="interactions" value="157"/>
</dbReference>
<dbReference type="FunCoup" id="Q9H4P4">
    <property type="interactions" value="2299"/>
</dbReference>
<dbReference type="IntAct" id="Q9H4P4">
    <property type="interactions" value="93"/>
</dbReference>
<dbReference type="MINT" id="Q9H4P4"/>
<dbReference type="STRING" id="9606.ENSP00000342755"/>
<dbReference type="iPTMnet" id="Q9H4P4"/>
<dbReference type="PhosphoSitePlus" id="Q9H4P4"/>
<dbReference type="BioMuta" id="RNF41"/>
<dbReference type="DMDM" id="88909120"/>
<dbReference type="jPOST" id="Q9H4P4"/>
<dbReference type="MassIVE" id="Q9H4P4"/>
<dbReference type="PaxDb" id="9606-ENSP00000342755"/>
<dbReference type="PeptideAtlas" id="Q9H4P4"/>
<dbReference type="ProteomicsDB" id="1082"/>
<dbReference type="ProteomicsDB" id="80869">
    <molecule id="Q9H4P4-1"/>
</dbReference>
<dbReference type="Pumba" id="Q9H4P4"/>
<dbReference type="Antibodypedia" id="15762">
    <property type="antibodies" value="201 antibodies from 31 providers"/>
</dbReference>
<dbReference type="DNASU" id="10193"/>
<dbReference type="Ensembl" id="ENST00000345093.9">
    <molecule id="Q9H4P4-1"/>
    <property type="protein sequence ID" value="ENSP00000342755.4"/>
    <property type="gene ID" value="ENSG00000181852.18"/>
</dbReference>
<dbReference type="Ensembl" id="ENST00000394013.6">
    <molecule id="Q9H4P4-2"/>
    <property type="protein sequence ID" value="ENSP00000377581.2"/>
    <property type="gene ID" value="ENSG00000181852.18"/>
</dbReference>
<dbReference type="Ensembl" id="ENST00000552656.5">
    <molecule id="Q9H4P4-1"/>
    <property type="protein sequence ID" value="ENSP00000447303.1"/>
    <property type="gene ID" value="ENSG00000181852.18"/>
</dbReference>
<dbReference type="Ensembl" id="ENST00000615206.4">
    <molecule id="Q9H4P4-1"/>
    <property type="protein sequence ID" value="ENSP00000484671.1"/>
    <property type="gene ID" value="ENSG00000181852.18"/>
</dbReference>
<dbReference type="GeneID" id="10193"/>
<dbReference type="KEGG" id="hsa:10193"/>
<dbReference type="MANE-Select" id="ENST00000345093.9">
    <property type="protein sequence ID" value="ENSP00000342755.4"/>
    <property type="RefSeq nucleotide sequence ID" value="NM_005785.4"/>
    <property type="RefSeq protein sequence ID" value="NP_005776.1"/>
</dbReference>
<dbReference type="UCSC" id="uc001ske.3">
    <molecule id="Q9H4P4-1"/>
    <property type="organism name" value="human"/>
</dbReference>
<dbReference type="AGR" id="HGNC:18401"/>
<dbReference type="CTD" id="10193"/>
<dbReference type="DisGeNET" id="10193"/>
<dbReference type="GeneCards" id="RNF41"/>
<dbReference type="HGNC" id="HGNC:18401">
    <property type="gene designation" value="RNF41"/>
</dbReference>
<dbReference type="HPA" id="ENSG00000181852">
    <property type="expression patterns" value="Low tissue specificity"/>
</dbReference>
<dbReference type="MIM" id="620051">
    <property type="type" value="gene"/>
</dbReference>
<dbReference type="neXtProt" id="NX_Q9H4P4"/>
<dbReference type="OpenTargets" id="ENSG00000181852"/>
<dbReference type="PharmGKB" id="PA134875033"/>
<dbReference type="VEuPathDB" id="HostDB:ENSG00000181852"/>
<dbReference type="eggNOG" id="KOG0297">
    <property type="taxonomic scope" value="Eukaryota"/>
</dbReference>
<dbReference type="GeneTree" id="ENSGT00530000063647"/>
<dbReference type="HOGENOM" id="CLU_076732_0_0_1"/>
<dbReference type="InParanoid" id="Q9H4P4"/>
<dbReference type="OMA" id="QYENYVC"/>
<dbReference type="OrthoDB" id="1630758at2759"/>
<dbReference type="PAN-GO" id="Q9H4P4">
    <property type="GO annotations" value="3 GO annotations based on evolutionary models"/>
</dbReference>
<dbReference type="PhylomeDB" id="Q9H4P4"/>
<dbReference type="TreeFam" id="TF351947"/>
<dbReference type="PathwayCommons" id="Q9H4P4"/>
<dbReference type="Reactome" id="R-HSA-1358803">
    <property type="pathway name" value="Downregulation of ERBB2:ERBB3 signaling"/>
</dbReference>
<dbReference type="Reactome" id="R-HSA-983168">
    <property type="pathway name" value="Antigen processing: Ubiquitination &amp; Proteasome degradation"/>
</dbReference>
<dbReference type="SignaLink" id="Q9H4P4"/>
<dbReference type="SIGNOR" id="Q9H4P4"/>
<dbReference type="UniPathway" id="UPA00143"/>
<dbReference type="BioGRID-ORCS" id="10193">
    <property type="hits" value="36 hits in 1204 CRISPR screens"/>
</dbReference>
<dbReference type="ChiTaRS" id="RNF41">
    <property type="organism name" value="human"/>
</dbReference>
<dbReference type="EvolutionaryTrace" id="Q9H4P4"/>
<dbReference type="GeneWiki" id="RNF41"/>
<dbReference type="GenomeRNAi" id="10193"/>
<dbReference type="Pharos" id="Q9H4P4">
    <property type="development level" value="Tbio"/>
</dbReference>
<dbReference type="PRO" id="PR:Q9H4P4"/>
<dbReference type="Proteomes" id="UP000005640">
    <property type="component" value="Chromosome 12"/>
</dbReference>
<dbReference type="RNAct" id="Q9H4P4">
    <property type="molecule type" value="protein"/>
</dbReference>
<dbReference type="Bgee" id="ENSG00000181852">
    <property type="expression patterns" value="Expressed in Brodmann (1909) area 10 and 187 other cell types or tissues"/>
</dbReference>
<dbReference type="ExpressionAtlas" id="Q9H4P4">
    <property type="expression patterns" value="baseline and differential"/>
</dbReference>
<dbReference type="GO" id="GO:0005829">
    <property type="term" value="C:cytosol"/>
    <property type="evidence" value="ECO:0000304"/>
    <property type="project" value="Reactome"/>
</dbReference>
<dbReference type="GO" id="GO:0071782">
    <property type="term" value="C:endoplasmic reticulum tubular network"/>
    <property type="evidence" value="ECO:0000314"/>
    <property type="project" value="CAFA"/>
</dbReference>
<dbReference type="GO" id="GO:0048471">
    <property type="term" value="C:perinuclear region of cytoplasm"/>
    <property type="evidence" value="ECO:0000314"/>
    <property type="project" value="CAFA"/>
</dbReference>
<dbReference type="GO" id="GO:0005128">
    <property type="term" value="F:erythropoietin receptor binding"/>
    <property type="evidence" value="ECO:0007669"/>
    <property type="project" value="Ensembl"/>
</dbReference>
<dbReference type="GO" id="GO:0042802">
    <property type="term" value="F:identical protein binding"/>
    <property type="evidence" value="ECO:0000353"/>
    <property type="project" value="IntAct"/>
</dbReference>
<dbReference type="GO" id="GO:0005135">
    <property type="term" value="F:interleukin-3 receptor binding"/>
    <property type="evidence" value="ECO:0007669"/>
    <property type="project" value="Ensembl"/>
</dbReference>
<dbReference type="GO" id="GO:0019904">
    <property type="term" value="F:protein domain specific binding"/>
    <property type="evidence" value="ECO:0000353"/>
    <property type="project" value="CAFA"/>
</dbReference>
<dbReference type="GO" id="GO:0030971">
    <property type="term" value="F:receptor tyrosine kinase binding"/>
    <property type="evidence" value="ECO:0000353"/>
    <property type="project" value="CAFA"/>
</dbReference>
<dbReference type="GO" id="GO:0031267">
    <property type="term" value="F:small GTPase binding"/>
    <property type="evidence" value="ECO:0000353"/>
    <property type="project" value="UniProtKB"/>
</dbReference>
<dbReference type="GO" id="GO:0061630">
    <property type="term" value="F:ubiquitin protein ligase activity"/>
    <property type="evidence" value="ECO:0000314"/>
    <property type="project" value="ParkinsonsUK-UCL"/>
</dbReference>
<dbReference type="GO" id="GO:0004842">
    <property type="term" value="F:ubiquitin-protein transferase activity"/>
    <property type="evidence" value="ECO:0000314"/>
    <property type="project" value="UniProtKB"/>
</dbReference>
<dbReference type="GO" id="GO:0008270">
    <property type="term" value="F:zinc ion binding"/>
    <property type="evidence" value="ECO:0007669"/>
    <property type="project" value="UniProtKB-KW"/>
</dbReference>
<dbReference type="GO" id="GO:0006914">
    <property type="term" value="P:autophagy"/>
    <property type="evidence" value="ECO:0007669"/>
    <property type="project" value="UniProtKB-KW"/>
</dbReference>
<dbReference type="GO" id="GO:0097191">
    <property type="term" value="P:extrinsic apoptotic signaling pathway"/>
    <property type="evidence" value="ECO:0000314"/>
    <property type="project" value="UniProtKB"/>
</dbReference>
<dbReference type="GO" id="GO:0030336">
    <property type="term" value="P:negative regulation of cell migration"/>
    <property type="evidence" value="ECO:0000315"/>
    <property type="project" value="MGI"/>
</dbReference>
<dbReference type="GO" id="GO:0008285">
    <property type="term" value="P:negative regulation of cell population proliferation"/>
    <property type="evidence" value="ECO:0000314"/>
    <property type="project" value="MGI"/>
</dbReference>
<dbReference type="GO" id="GO:1901525">
    <property type="term" value="P:negative regulation of mitophagy"/>
    <property type="evidence" value="ECO:0007669"/>
    <property type="project" value="Ensembl"/>
</dbReference>
<dbReference type="GO" id="GO:0045732">
    <property type="term" value="P:positive regulation of protein catabolic process"/>
    <property type="evidence" value="ECO:0000315"/>
    <property type="project" value="CAFA"/>
</dbReference>
<dbReference type="GO" id="GO:2000379">
    <property type="term" value="P:positive regulation of reactive oxygen species metabolic process"/>
    <property type="evidence" value="ECO:0000315"/>
    <property type="project" value="ParkinsonsUK-UCL"/>
</dbReference>
<dbReference type="GO" id="GO:0010498">
    <property type="term" value="P:proteasomal protein catabolic process"/>
    <property type="evidence" value="ECO:0000314"/>
    <property type="project" value="ParkinsonsUK-UCL"/>
</dbReference>
<dbReference type="GO" id="GO:0051865">
    <property type="term" value="P:protein autoubiquitination"/>
    <property type="evidence" value="ECO:0000314"/>
    <property type="project" value="FlyBase"/>
</dbReference>
<dbReference type="GO" id="GO:0000209">
    <property type="term" value="P:protein polyubiquitination"/>
    <property type="evidence" value="ECO:0000314"/>
    <property type="project" value="UniProtKB"/>
</dbReference>
<dbReference type="GO" id="GO:0045619">
    <property type="term" value="P:regulation of lymphocyte differentiation"/>
    <property type="evidence" value="ECO:0007669"/>
    <property type="project" value="Ensembl"/>
</dbReference>
<dbReference type="GO" id="GO:0043408">
    <property type="term" value="P:regulation of MAPK cascade"/>
    <property type="evidence" value="ECO:0000314"/>
    <property type="project" value="MGI"/>
</dbReference>
<dbReference type="GO" id="GO:0045637">
    <property type="term" value="P:regulation of myeloid cell differentiation"/>
    <property type="evidence" value="ECO:0007669"/>
    <property type="project" value="Ensembl"/>
</dbReference>
<dbReference type="GO" id="GO:0051896">
    <property type="term" value="P:regulation of phosphatidylinositol 3-kinase/protein kinase B signal transduction"/>
    <property type="evidence" value="ECO:0000314"/>
    <property type="project" value="MGI"/>
</dbReference>
<dbReference type="GO" id="GO:2000377">
    <property type="term" value="P:regulation of reactive oxygen species metabolic process"/>
    <property type="evidence" value="ECO:0000315"/>
    <property type="project" value="UniProtKB"/>
</dbReference>
<dbReference type="CDD" id="cd16634">
    <property type="entry name" value="mRING-HC-C3HC3D_Nrdp1"/>
    <property type="match status" value="1"/>
</dbReference>
<dbReference type="FunFam" id="3.30.40.10:FF:000268">
    <property type="entry name" value="E3 ubiquitin-protein ligase NRDP1"/>
    <property type="match status" value="1"/>
</dbReference>
<dbReference type="FunFam" id="3.30.40.10:FF:000302">
    <property type="entry name" value="E3 ubiquitin-protein ligase NRDP1"/>
    <property type="match status" value="1"/>
</dbReference>
<dbReference type="Gene3D" id="3.30.40.10">
    <property type="entry name" value="Zinc/RING finger domain, C3HC4 (zinc finger)"/>
    <property type="match status" value="2"/>
</dbReference>
<dbReference type="InterPro" id="IPR015036">
    <property type="entry name" value="NRDP1"/>
</dbReference>
<dbReference type="InterPro" id="IPR037255">
    <property type="entry name" value="NRDP1_C"/>
</dbReference>
<dbReference type="InterPro" id="IPR001841">
    <property type="entry name" value="Znf_RING"/>
</dbReference>
<dbReference type="InterPro" id="IPR013083">
    <property type="entry name" value="Znf_RING/FYVE/PHD"/>
</dbReference>
<dbReference type="InterPro" id="IPR017907">
    <property type="entry name" value="Znf_RING_CS"/>
</dbReference>
<dbReference type="InterPro" id="IPR013010">
    <property type="entry name" value="Znf_SIAH"/>
</dbReference>
<dbReference type="PANTHER" id="PTHR10131:SF157">
    <property type="entry name" value="RECEPTOR-ASSOCIATED FACTOR, PUTATIVE-RELATED"/>
    <property type="match status" value="1"/>
</dbReference>
<dbReference type="PANTHER" id="PTHR10131">
    <property type="entry name" value="TNF RECEPTOR ASSOCIATED FACTOR"/>
    <property type="match status" value="1"/>
</dbReference>
<dbReference type="Pfam" id="PF08941">
    <property type="entry name" value="USP8_interact"/>
    <property type="match status" value="1"/>
</dbReference>
<dbReference type="Pfam" id="PF13923">
    <property type="entry name" value="zf-C3HC4_2"/>
    <property type="match status" value="1"/>
</dbReference>
<dbReference type="SMART" id="SM00184">
    <property type="entry name" value="RING"/>
    <property type="match status" value="1"/>
</dbReference>
<dbReference type="SUPFAM" id="SSF160088">
    <property type="entry name" value="NRDP1 C-terminal domain-like"/>
    <property type="match status" value="1"/>
</dbReference>
<dbReference type="SUPFAM" id="SSF57850">
    <property type="entry name" value="RING/U-box"/>
    <property type="match status" value="1"/>
</dbReference>
<dbReference type="SUPFAM" id="SSF49599">
    <property type="entry name" value="TRAF domain-like"/>
    <property type="match status" value="1"/>
</dbReference>
<dbReference type="PROSITE" id="PS00518">
    <property type="entry name" value="ZF_RING_1"/>
    <property type="match status" value="1"/>
</dbReference>
<dbReference type="PROSITE" id="PS50089">
    <property type="entry name" value="ZF_RING_2"/>
    <property type="match status" value="1"/>
</dbReference>
<dbReference type="PROSITE" id="PS51081">
    <property type="entry name" value="ZF_SIAH"/>
    <property type="match status" value="1"/>
</dbReference>
<sequence>MGYDVTRFQGDVDEDLICPICSGVLEEPVQAPHCEHAFCNACITQWFSQQQTCPVDRSVVTVAHLRPVPRIMRNMLSKLQIACDNAVFGCSAVVRLDNLMSHLSDCEHNPKRPVTCEQGCGLEMPKDELPNHNCIKHLRSVVQQQQTRIAELEKTSAEHKHQLAEQKRDIQLLKAYMRAIRSVNPNLQNLEETIEYNEILEWVNSLQPARVTRWGGMISTPDAVLQAVIKRSLVESGCPASIVNELIENAHERSWPQGLATLETRQMNRRYYENYVAKRIPGKQAVVVMACENQHMGDDMVQEPGLVMIFAHGVEEI</sequence>
<reference key="1">
    <citation type="submission" date="1998-07" db="EMBL/GenBank/DDBJ databases">
        <title>Hypothetical protein SBBI03.</title>
        <authorList>
            <person name="Zhang W."/>
            <person name="Cao X."/>
            <person name="Wan T."/>
            <person name="Yuan Z."/>
            <person name="He L."/>
            <person name="Li N."/>
            <person name="Zhu X."/>
            <person name="Tao Q."/>
        </authorList>
    </citation>
    <scope>NUCLEOTIDE SEQUENCE [MRNA] (ISOFORM 1)</scope>
</reference>
<reference key="2">
    <citation type="journal article" date="2004" name="Nat. Genet.">
        <title>Complete sequencing and characterization of 21,243 full-length human cDNAs.</title>
        <authorList>
            <person name="Ota T."/>
            <person name="Suzuki Y."/>
            <person name="Nishikawa T."/>
            <person name="Otsuki T."/>
            <person name="Sugiyama T."/>
            <person name="Irie R."/>
            <person name="Wakamatsu A."/>
            <person name="Hayashi K."/>
            <person name="Sato H."/>
            <person name="Nagai K."/>
            <person name="Kimura K."/>
            <person name="Makita H."/>
            <person name="Sekine M."/>
            <person name="Obayashi M."/>
            <person name="Nishi T."/>
            <person name="Shibahara T."/>
            <person name="Tanaka T."/>
            <person name="Ishii S."/>
            <person name="Yamamoto J."/>
            <person name="Saito K."/>
            <person name="Kawai Y."/>
            <person name="Isono Y."/>
            <person name="Nakamura Y."/>
            <person name="Nagahari K."/>
            <person name="Murakami K."/>
            <person name="Yasuda T."/>
            <person name="Iwayanagi T."/>
            <person name="Wagatsuma M."/>
            <person name="Shiratori A."/>
            <person name="Sudo H."/>
            <person name="Hosoiri T."/>
            <person name="Kaku Y."/>
            <person name="Kodaira H."/>
            <person name="Kondo H."/>
            <person name="Sugawara M."/>
            <person name="Takahashi M."/>
            <person name="Kanda K."/>
            <person name="Yokoi T."/>
            <person name="Furuya T."/>
            <person name="Kikkawa E."/>
            <person name="Omura Y."/>
            <person name="Abe K."/>
            <person name="Kamihara K."/>
            <person name="Katsuta N."/>
            <person name="Sato K."/>
            <person name="Tanikawa M."/>
            <person name="Yamazaki M."/>
            <person name="Ninomiya K."/>
            <person name="Ishibashi T."/>
            <person name="Yamashita H."/>
            <person name="Murakawa K."/>
            <person name="Fujimori K."/>
            <person name="Tanai H."/>
            <person name="Kimata M."/>
            <person name="Watanabe M."/>
            <person name="Hiraoka S."/>
            <person name="Chiba Y."/>
            <person name="Ishida S."/>
            <person name="Ono Y."/>
            <person name="Takiguchi S."/>
            <person name="Watanabe S."/>
            <person name="Yosida M."/>
            <person name="Hotuta T."/>
            <person name="Kusano J."/>
            <person name="Kanehori K."/>
            <person name="Takahashi-Fujii A."/>
            <person name="Hara H."/>
            <person name="Tanase T.-O."/>
            <person name="Nomura Y."/>
            <person name="Togiya S."/>
            <person name="Komai F."/>
            <person name="Hara R."/>
            <person name="Takeuchi K."/>
            <person name="Arita M."/>
            <person name="Imose N."/>
            <person name="Musashino K."/>
            <person name="Yuuki H."/>
            <person name="Oshima A."/>
            <person name="Sasaki N."/>
            <person name="Aotsuka S."/>
            <person name="Yoshikawa Y."/>
            <person name="Matsunawa H."/>
            <person name="Ichihara T."/>
            <person name="Shiohata N."/>
            <person name="Sano S."/>
            <person name="Moriya S."/>
            <person name="Momiyama H."/>
            <person name="Satoh N."/>
            <person name="Takami S."/>
            <person name="Terashima Y."/>
            <person name="Suzuki O."/>
            <person name="Nakagawa S."/>
            <person name="Senoh A."/>
            <person name="Mizoguchi H."/>
            <person name="Goto Y."/>
            <person name="Shimizu F."/>
            <person name="Wakebe H."/>
            <person name="Hishigaki H."/>
            <person name="Watanabe T."/>
            <person name="Sugiyama A."/>
            <person name="Takemoto M."/>
            <person name="Kawakami B."/>
            <person name="Yamazaki M."/>
            <person name="Watanabe K."/>
            <person name="Kumagai A."/>
            <person name="Itakura S."/>
            <person name="Fukuzumi Y."/>
            <person name="Fujimori Y."/>
            <person name="Komiyama M."/>
            <person name="Tashiro H."/>
            <person name="Tanigami A."/>
            <person name="Fujiwara T."/>
            <person name="Ono T."/>
            <person name="Yamada K."/>
            <person name="Fujii Y."/>
            <person name="Ozaki K."/>
            <person name="Hirao M."/>
            <person name="Ohmori Y."/>
            <person name="Kawabata A."/>
            <person name="Hikiji T."/>
            <person name="Kobatake N."/>
            <person name="Inagaki H."/>
            <person name="Ikema Y."/>
            <person name="Okamoto S."/>
            <person name="Okitani R."/>
            <person name="Kawakami T."/>
            <person name="Noguchi S."/>
            <person name="Itoh T."/>
            <person name="Shigeta K."/>
            <person name="Senba T."/>
            <person name="Matsumura K."/>
            <person name="Nakajima Y."/>
            <person name="Mizuno T."/>
            <person name="Morinaga M."/>
            <person name="Sasaki M."/>
            <person name="Togashi T."/>
            <person name="Oyama M."/>
            <person name="Hata H."/>
            <person name="Watanabe M."/>
            <person name="Komatsu T."/>
            <person name="Mizushima-Sugano J."/>
            <person name="Satoh T."/>
            <person name="Shirai Y."/>
            <person name="Takahashi Y."/>
            <person name="Nakagawa K."/>
            <person name="Okumura K."/>
            <person name="Nagase T."/>
            <person name="Nomura N."/>
            <person name="Kikuchi H."/>
            <person name="Masuho Y."/>
            <person name="Yamashita R."/>
            <person name="Nakai K."/>
            <person name="Yada T."/>
            <person name="Nakamura Y."/>
            <person name="Ohara O."/>
            <person name="Isogai T."/>
            <person name="Sugano S."/>
        </authorList>
    </citation>
    <scope>NUCLEOTIDE SEQUENCE [LARGE SCALE MRNA] (ISOFORM 1)</scope>
</reference>
<reference key="3">
    <citation type="journal article" date="2006" name="Nature">
        <title>The finished DNA sequence of human chromosome 12.</title>
        <authorList>
            <person name="Scherer S.E."/>
            <person name="Muzny D.M."/>
            <person name="Buhay C.J."/>
            <person name="Chen R."/>
            <person name="Cree A."/>
            <person name="Ding Y."/>
            <person name="Dugan-Rocha S."/>
            <person name="Gill R."/>
            <person name="Gunaratne P."/>
            <person name="Harris R.A."/>
            <person name="Hawes A.C."/>
            <person name="Hernandez J."/>
            <person name="Hodgson A.V."/>
            <person name="Hume J."/>
            <person name="Jackson A."/>
            <person name="Khan Z.M."/>
            <person name="Kovar-Smith C."/>
            <person name="Lewis L.R."/>
            <person name="Lozado R.J."/>
            <person name="Metzker M.L."/>
            <person name="Milosavljevic A."/>
            <person name="Miner G.R."/>
            <person name="Montgomery K.T."/>
            <person name="Morgan M.B."/>
            <person name="Nazareth L.V."/>
            <person name="Scott G."/>
            <person name="Sodergren E."/>
            <person name="Song X.-Z."/>
            <person name="Steffen D."/>
            <person name="Lovering R.C."/>
            <person name="Wheeler D.A."/>
            <person name="Worley K.C."/>
            <person name="Yuan Y."/>
            <person name="Zhang Z."/>
            <person name="Adams C.Q."/>
            <person name="Ansari-Lari M.A."/>
            <person name="Ayele M."/>
            <person name="Brown M.J."/>
            <person name="Chen G."/>
            <person name="Chen Z."/>
            <person name="Clerc-Blankenburg K.P."/>
            <person name="Davis C."/>
            <person name="Delgado O."/>
            <person name="Dinh H.H."/>
            <person name="Draper H."/>
            <person name="Gonzalez-Garay M.L."/>
            <person name="Havlak P."/>
            <person name="Jackson L.R."/>
            <person name="Jacob L.S."/>
            <person name="Kelly S.H."/>
            <person name="Li L."/>
            <person name="Li Z."/>
            <person name="Liu J."/>
            <person name="Liu W."/>
            <person name="Lu J."/>
            <person name="Maheshwari M."/>
            <person name="Nguyen B.-V."/>
            <person name="Okwuonu G.O."/>
            <person name="Pasternak S."/>
            <person name="Perez L.M."/>
            <person name="Plopper F.J.H."/>
            <person name="Santibanez J."/>
            <person name="Shen H."/>
            <person name="Tabor P.E."/>
            <person name="Verduzco D."/>
            <person name="Waldron L."/>
            <person name="Wang Q."/>
            <person name="Williams G.A."/>
            <person name="Zhang J."/>
            <person name="Zhou J."/>
            <person name="Allen C.C."/>
            <person name="Amin A.G."/>
            <person name="Anyalebechi V."/>
            <person name="Bailey M."/>
            <person name="Barbaria J.A."/>
            <person name="Bimage K.E."/>
            <person name="Bryant N.P."/>
            <person name="Burch P.E."/>
            <person name="Burkett C.E."/>
            <person name="Burrell K.L."/>
            <person name="Calderon E."/>
            <person name="Cardenas V."/>
            <person name="Carter K."/>
            <person name="Casias K."/>
            <person name="Cavazos I."/>
            <person name="Cavazos S.R."/>
            <person name="Ceasar H."/>
            <person name="Chacko J."/>
            <person name="Chan S.N."/>
            <person name="Chavez D."/>
            <person name="Christopoulos C."/>
            <person name="Chu J."/>
            <person name="Cockrell R."/>
            <person name="Cox C.D."/>
            <person name="Dang M."/>
            <person name="Dathorne S.R."/>
            <person name="David R."/>
            <person name="Davis C.M."/>
            <person name="Davy-Carroll L."/>
            <person name="Deshazo D.R."/>
            <person name="Donlin J.E."/>
            <person name="D'Souza L."/>
            <person name="Eaves K.A."/>
            <person name="Egan A."/>
            <person name="Emery-Cohen A.J."/>
            <person name="Escotto M."/>
            <person name="Flagg N."/>
            <person name="Forbes L.D."/>
            <person name="Gabisi A.M."/>
            <person name="Garza M."/>
            <person name="Hamilton C."/>
            <person name="Henderson N."/>
            <person name="Hernandez O."/>
            <person name="Hines S."/>
            <person name="Hogues M.E."/>
            <person name="Huang M."/>
            <person name="Idlebird D.G."/>
            <person name="Johnson R."/>
            <person name="Jolivet A."/>
            <person name="Jones S."/>
            <person name="Kagan R."/>
            <person name="King L.M."/>
            <person name="Leal B."/>
            <person name="Lebow H."/>
            <person name="Lee S."/>
            <person name="LeVan J.M."/>
            <person name="Lewis L.C."/>
            <person name="London P."/>
            <person name="Lorensuhewa L.M."/>
            <person name="Loulseged H."/>
            <person name="Lovett D.A."/>
            <person name="Lucier A."/>
            <person name="Lucier R.L."/>
            <person name="Ma J."/>
            <person name="Madu R.C."/>
            <person name="Mapua P."/>
            <person name="Martindale A.D."/>
            <person name="Martinez E."/>
            <person name="Massey E."/>
            <person name="Mawhiney S."/>
            <person name="Meador M.G."/>
            <person name="Mendez S."/>
            <person name="Mercado C."/>
            <person name="Mercado I.C."/>
            <person name="Merritt C.E."/>
            <person name="Miner Z.L."/>
            <person name="Minja E."/>
            <person name="Mitchell T."/>
            <person name="Mohabbat F."/>
            <person name="Mohabbat K."/>
            <person name="Montgomery B."/>
            <person name="Moore N."/>
            <person name="Morris S."/>
            <person name="Munidasa M."/>
            <person name="Ngo R.N."/>
            <person name="Nguyen N.B."/>
            <person name="Nickerson E."/>
            <person name="Nwaokelemeh O.O."/>
            <person name="Nwokenkwo S."/>
            <person name="Obregon M."/>
            <person name="Oguh M."/>
            <person name="Oragunye N."/>
            <person name="Oviedo R.J."/>
            <person name="Parish B.J."/>
            <person name="Parker D.N."/>
            <person name="Parrish J."/>
            <person name="Parks K.L."/>
            <person name="Paul H.A."/>
            <person name="Payton B.A."/>
            <person name="Perez A."/>
            <person name="Perrin W."/>
            <person name="Pickens A."/>
            <person name="Primus E.L."/>
            <person name="Pu L.-L."/>
            <person name="Puazo M."/>
            <person name="Quiles M.M."/>
            <person name="Quiroz J.B."/>
            <person name="Rabata D."/>
            <person name="Reeves K."/>
            <person name="Ruiz S.J."/>
            <person name="Shao H."/>
            <person name="Sisson I."/>
            <person name="Sonaike T."/>
            <person name="Sorelle R.P."/>
            <person name="Sutton A.E."/>
            <person name="Svatek A.F."/>
            <person name="Svetz L.A."/>
            <person name="Tamerisa K.S."/>
            <person name="Taylor T.R."/>
            <person name="Teague B."/>
            <person name="Thomas N."/>
            <person name="Thorn R.D."/>
            <person name="Trejos Z.Y."/>
            <person name="Trevino B.K."/>
            <person name="Ukegbu O.N."/>
            <person name="Urban J.B."/>
            <person name="Vasquez L.I."/>
            <person name="Vera V.A."/>
            <person name="Villasana D.M."/>
            <person name="Wang L."/>
            <person name="Ward-Moore S."/>
            <person name="Warren J.T."/>
            <person name="Wei X."/>
            <person name="White F."/>
            <person name="Williamson A.L."/>
            <person name="Wleczyk R."/>
            <person name="Wooden H.S."/>
            <person name="Wooden S.H."/>
            <person name="Yen J."/>
            <person name="Yoon L."/>
            <person name="Yoon V."/>
            <person name="Zorrilla S.E."/>
            <person name="Nelson D."/>
            <person name="Kucherlapati R."/>
            <person name="Weinstock G."/>
            <person name="Gibbs R.A."/>
        </authorList>
    </citation>
    <scope>NUCLEOTIDE SEQUENCE [LARGE SCALE GENOMIC DNA]</scope>
</reference>
<reference key="4">
    <citation type="submission" date="2005-07" db="EMBL/GenBank/DDBJ databases">
        <authorList>
            <person name="Mural R.J."/>
            <person name="Istrail S."/>
            <person name="Sutton G.G."/>
            <person name="Florea L."/>
            <person name="Halpern A.L."/>
            <person name="Mobarry C.M."/>
            <person name="Lippert R."/>
            <person name="Walenz B."/>
            <person name="Shatkay H."/>
            <person name="Dew I."/>
            <person name="Miller J.R."/>
            <person name="Flanigan M.J."/>
            <person name="Edwards N.J."/>
            <person name="Bolanos R."/>
            <person name="Fasulo D."/>
            <person name="Halldorsson B.V."/>
            <person name="Hannenhalli S."/>
            <person name="Turner R."/>
            <person name="Yooseph S."/>
            <person name="Lu F."/>
            <person name="Nusskern D.R."/>
            <person name="Shue B.C."/>
            <person name="Zheng X.H."/>
            <person name="Zhong F."/>
            <person name="Delcher A.L."/>
            <person name="Huson D.H."/>
            <person name="Kravitz S.A."/>
            <person name="Mouchard L."/>
            <person name="Reinert K."/>
            <person name="Remington K.A."/>
            <person name="Clark A.G."/>
            <person name="Waterman M.S."/>
            <person name="Eichler E.E."/>
            <person name="Adams M.D."/>
            <person name="Hunkapiller M.W."/>
            <person name="Myers E.W."/>
            <person name="Venter J.C."/>
        </authorList>
    </citation>
    <scope>NUCLEOTIDE SEQUENCE [LARGE SCALE GENOMIC DNA]</scope>
</reference>
<reference key="5">
    <citation type="journal article" date="2004" name="Genome Res.">
        <title>The status, quality, and expansion of the NIH full-length cDNA project: the Mammalian Gene Collection (MGC).</title>
        <authorList>
            <consortium name="The MGC Project Team"/>
        </authorList>
    </citation>
    <scope>NUCLEOTIDE SEQUENCE [LARGE SCALE MRNA] (ISOFORMS 1 AND 2)</scope>
    <source>
        <tissue>Leiomyosarcoma</tissue>
        <tissue>Lymph</tissue>
    </source>
</reference>
<reference key="6">
    <citation type="submission" date="2000-07" db="EMBL/GenBank/DDBJ databases">
        <authorList>
            <person name="Zhou J."/>
            <person name="Yu W."/>
            <person name="Tang H."/>
            <person name="Mei G."/>
            <person name="Tsang Y.T.M."/>
            <person name="Bouck J."/>
            <person name="Gibbs R.A."/>
            <person name="Margolin J.F."/>
        </authorList>
    </citation>
    <scope>NUCLEOTIDE SEQUENCE [LARGE SCALE MRNA] OF 169-317 (ISOFORM 1)</scope>
    <source>
        <tissue>Lymphoblast</tissue>
    </source>
</reference>
<reference key="7">
    <citation type="journal article" date="2002" name="Proc. Natl. Acad. Sci. U.S.A.">
        <title>Nrdp1/FLRF is a ubiquitin ligase promoting ubiquitination and degradation of the epidermal growth factor receptor family member, ErbB3.</title>
        <authorList>
            <person name="Qiu X.-B."/>
            <person name="Goldberg A.L."/>
        </authorList>
    </citation>
    <scope>FUNCTION</scope>
    <scope>INTERACTION WITH ERBB3</scope>
    <scope>MUTAGENESIS OF CYS-34; HIS-36 AND ASP-56</scope>
    <scope>TISSUE SPECIFICITY</scope>
</reference>
<reference key="8">
    <citation type="journal article" date="2004" name="EMBO J.">
        <title>Nrdp1-mediated degradation of the gigantic IAP, BRUCE, is a novel pathway for triggering apoptosis.</title>
        <authorList>
            <person name="Qiu X.B."/>
            <person name="Markant S.L."/>
            <person name="Yuan J."/>
            <person name="Goldberg A.L."/>
        </authorList>
    </citation>
    <scope>FUNCTION</scope>
    <scope>INTERACTION WITH BIRC6</scope>
</reference>
<reference key="9">
    <citation type="journal article" date="2004" name="Mol. Cell. Biol.">
        <title>Stabilization of the E3 ubiquitin ligase Nrdp1 by the deubiquitinating enzyme USP8.</title>
        <authorList>
            <person name="Wu X."/>
            <person name="Yen L."/>
            <person name="Irwin L."/>
            <person name="Sweeney C."/>
            <person name="Carraway K.L. III"/>
        </authorList>
    </citation>
    <scope>AUTOUBIQUITINATION</scope>
    <scope>INTERACTION WITH USP8</scope>
    <scope>DEUBIQUITINATION BY USP8</scope>
    <scope>MUTAGENESIS OF CYS-34 AND HIS-36</scope>
</reference>
<reference key="10">
    <citation type="journal article" date="2005" name="J. Biol. Chem.">
        <title>RING finger ubiquitin-protein isopeptide ligase Nrdp1/FLRF regulates parkin stability and activity.</title>
        <authorList>
            <person name="Zhong L."/>
            <person name="Tan Y."/>
            <person name="Zhou A."/>
            <person name="Yu Q."/>
            <person name="Zhou J."/>
        </authorList>
    </citation>
    <scope>FUNCTION</scope>
    <scope>INTERACTION WITH PRKN</scope>
</reference>
<reference key="11">
    <citation type="journal article" date="2007" name="Mol. Cell. Biol.">
        <title>Neuregulin-induced ErbB3 downregulation is mediated by a protein stability cascade involving the E3 ubiquitin ligase Nrdp1.</title>
        <authorList>
            <person name="Cao Z."/>
            <person name="Wu X."/>
            <person name="Yen L."/>
            <person name="Sweeney C."/>
            <person name="Carraway K.L. III"/>
        </authorList>
    </citation>
    <scope>FUNCTION</scope>
    <scope>UBIQUITINATION</scope>
</reference>
<reference key="12">
    <citation type="journal article" date="2008" name="Neurosci. Lett.">
        <title>Parkin is ubiquitinated by Nrdp1 and abrogates Nrdp1-induced oxidative stress.</title>
        <authorList>
            <person name="Yu F."/>
            <person name="Zhou J."/>
        </authorList>
    </citation>
    <scope>FUNCTION</scope>
    <scope>INTERACTION WITH PRKN</scope>
</reference>
<reference key="13">
    <citation type="journal article" date="2009" name="Nat. Immunol.">
        <title>The E3 ubiquitin ligase Nrdp1 'preferentially' promotes TLR-mediated production of type I interferon.</title>
        <authorList>
            <person name="Wang C."/>
            <person name="Chen T."/>
            <person name="Zhang J."/>
            <person name="Yang M."/>
            <person name="Li N."/>
            <person name="Xu X."/>
            <person name="Cao X."/>
        </authorList>
    </citation>
    <scope>FUNCTION</scope>
    <scope>UBIQUITINATION OF MYD88 AND TBK1</scope>
</reference>
<reference key="14">
    <citation type="journal article" date="2014" name="Cell">
        <title>The diabetes susceptibility gene Clec16a regulates mitophagy.</title>
        <authorList>
            <person name="Soleimanpour S.A."/>
            <person name="Gupta A."/>
            <person name="Bakay M."/>
            <person name="Ferrari A.M."/>
            <person name="Groff D.N."/>
            <person name="Fadista J."/>
            <person name="Spruce L.A."/>
            <person name="Kushner J.A."/>
            <person name="Groop L."/>
            <person name="Seeholzer S.H."/>
            <person name="Kaufman B.A."/>
            <person name="Hakonarson H."/>
            <person name="Stoffers D.A."/>
        </authorList>
    </citation>
    <scope>FUNCTION IN MITOPHAGY</scope>
</reference>
<reference key="15">
    <citation type="journal article" date="2006" name="J. Biol. Chem.">
        <title>Amino-terminal dimerization, NRDP1-rhodanese interaction, and inhibited catalytic domain conformation of the ubiquitin-specific protease 8 (USP8).</title>
        <authorList>
            <person name="Avvakumov G.V."/>
            <person name="Walker J.R."/>
            <person name="Xue S."/>
            <person name="Finerty P.J. Jr."/>
            <person name="Mackenzie F."/>
            <person name="Newman E.M."/>
            <person name="Dhe-Paganon S."/>
        </authorList>
    </citation>
    <scope>X-RAY CRYSTALLOGRAPHY (1.87 ANGSTROMS) OF 193-317 IN COMPLEX WITH USP8</scope>
</reference>
<name>RNF41_HUMAN</name>
<accession>Q9H4P4</accession>
<accession>A6NFW0</accession>
<accession>B2RBT8</accession>
<accession>O75598</accession>